<protein>
    <recommendedName>
        <fullName>UPF0053 protein Mb2387c</fullName>
    </recommendedName>
</protein>
<gene>
    <name type="ordered locus">BQ2027_MB2387C</name>
</gene>
<organism>
    <name type="scientific">Mycobacterium bovis (strain ATCC BAA-935 / AF2122/97)</name>
    <dbReference type="NCBI Taxonomy" id="233413"/>
    <lineage>
        <taxon>Bacteria</taxon>
        <taxon>Bacillati</taxon>
        <taxon>Actinomycetota</taxon>
        <taxon>Actinomycetes</taxon>
        <taxon>Mycobacteriales</taxon>
        <taxon>Mycobacteriaceae</taxon>
        <taxon>Mycobacterium</taxon>
        <taxon>Mycobacterium tuberculosis complex</taxon>
    </lineage>
</organism>
<accession>P67131</accession>
<accession>A0A1R3Y101</accession>
<accession>O05832</accession>
<accession>X2BKF9</accession>
<proteinExistence type="inferred from homology"/>
<comment type="subcellular location">
    <subcellularLocation>
        <location evidence="4">Cell membrane</location>
        <topology evidence="4">Multi-pass membrane protein</topology>
    </subcellularLocation>
</comment>
<comment type="similarity">
    <text evidence="4">Belongs to the UPF0053 family.</text>
</comment>
<keyword id="KW-0129">CBS domain</keyword>
<keyword id="KW-1003">Cell membrane</keyword>
<keyword id="KW-0472">Membrane</keyword>
<keyword id="KW-1185">Reference proteome</keyword>
<keyword id="KW-0677">Repeat</keyword>
<keyword id="KW-0812">Transmembrane</keyword>
<keyword id="KW-1133">Transmembrane helix</keyword>
<evidence type="ECO:0000255" key="1"/>
<evidence type="ECO:0000255" key="2">
    <source>
        <dbReference type="PROSITE-ProRule" id="PRU00703"/>
    </source>
</evidence>
<evidence type="ECO:0000255" key="3">
    <source>
        <dbReference type="PROSITE-ProRule" id="PRU01193"/>
    </source>
</evidence>
<evidence type="ECO:0000305" key="4"/>
<sequence length="435" mass="47213">MTGYYQLLGSIVLIGLGGLFAAIDAAISTVSPARVDELVRDQRPGAGSLRKVMADRPRYVNLVVLLRTSCEITATALLVVFIRYHFSMVWGLYLAAGIMVLASFVVVGVGPRTLGRQNAYSISLATALPLRLISWLLMPISRLLVLLGNALTPGRGFRNGPFASEIELREVVDLAQQRGVVAADERRMIESVFELGDTPAREVMVPRTEMIWIESDKTAGQAMTLAVRSGHSRIPVIGENVDDIVGVVYLKDLVEQTFCSTNGGRETTVARVMRPAVFVPDSKPLDALLREMQRDRNHMALLVDEYGAIAGLVSIEDVLEEIVGEIADEYDQAETAPVEDLGDKRFRVSARLPIEDVGELYGVEFDDDLDVDTVGGLLALELGRVPLPGAEVISHGLRLHAEGGTDHRGRVRIGTVLLSPAEPDGADDEEADHPG</sequence>
<name>Y2387_MYCBO</name>
<reference key="1">
    <citation type="journal article" date="2003" name="Proc. Natl. Acad. Sci. U.S.A.">
        <title>The complete genome sequence of Mycobacterium bovis.</title>
        <authorList>
            <person name="Garnier T."/>
            <person name="Eiglmeier K."/>
            <person name="Camus J.-C."/>
            <person name="Medina N."/>
            <person name="Mansoor H."/>
            <person name="Pryor M."/>
            <person name="Duthoy S."/>
            <person name="Grondin S."/>
            <person name="Lacroix C."/>
            <person name="Monsempe C."/>
            <person name="Simon S."/>
            <person name="Harris B."/>
            <person name="Atkin R."/>
            <person name="Doggett J."/>
            <person name="Mayes R."/>
            <person name="Keating L."/>
            <person name="Wheeler P.R."/>
            <person name="Parkhill J."/>
            <person name="Barrell B.G."/>
            <person name="Cole S.T."/>
            <person name="Gordon S.V."/>
            <person name="Hewinson R.G."/>
        </authorList>
    </citation>
    <scope>NUCLEOTIDE SEQUENCE [LARGE SCALE GENOMIC DNA]</scope>
    <source>
        <strain>ATCC BAA-935 / AF2122/97</strain>
    </source>
</reference>
<reference key="2">
    <citation type="journal article" date="2017" name="Genome Announc.">
        <title>Updated reference genome sequence and annotation of Mycobacterium bovis AF2122/97.</title>
        <authorList>
            <person name="Malone K.M."/>
            <person name="Farrell D."/>
            <person name="Stuber T.P."/>
            <person name="Schubert O.T."/>
            <person name="Aebersold R."/>
            <person name="Robbe-Austerman S."/>
            <person name="Gordon S.V."/>
        </authorList>
    </citation>
    <scope>NUCLEOTIDE SEQUENCE [LARGE SCALE GENOMIC DNA]</scope>
    <scope>GENOME REANNOTATION</scope>
    <source>
        <strain>ATCC BAA-935 / AF2122/97</strain>
    </source>
</reference>
<feature type="chain" id="PRO_0000088382" description="UPF0053 protein Mb2387c">
    <location>
        <begin position="1"/>
        <end position="435"/>
    </location>
</feature>
<feature type="transmembrane region" description="Helical" evidence="1">
    <location>
        <begin position="7"/>
        <end position="27"/>
    </location>
</feature>
<feature type="transmembrane region" description="Helical" evidence="1">
    <location>
        <begin position="89"/>
        <end position="109"/>
    </location>
</feature>
<feature type="domain" description="CNNM transmembrane" evidence="3">
    <location>
        <begin position="1"/>
        <end position="185"/>
    </location>
</feature>
<feature type="domain" description="CBS 1" evidence="2">
    <location>
        <begin position="204"/>
        <end position="267"/>
    </location>
</feature>
<feature type="domain" description="CBS 2" evidence="2">
    <location>
        <begin position="272"/>
        <end position="329"/>
    </location>
</feature>
<dbReference type="EMBL" id="LT708304">
    <property type="protein sequence ID" value="SIU00999.1"/>
    <property type="molecule type" value="Genomic_DNA"/>
</dbReference>
<dbReference type="RefSeq" id="NP_856036.1">
    <property type="nucleotide sequence ID" value="NC_002945.3"/>
</dbReference>
<dbReference type="RefSeq" id="WP_003412229.1">
    <property type="nucleotide sequence ID" value="NC_002945.4"/>
</dbReference>
<dbReference type="SMR" id="P67131"/>
<dbReference type="KEGG" id="mbo:BQ2027_MB2387C"/>
<dbReference type="PATRIC" id="fig|233413.5.peg.2622"/>
<dbReference type="Proteomes" id="UP000001419">
    <property type="component" value="Chromosome"/>
</dbReference>
<dbReference type="GO" id="GO:0005886">
    <property type="term" value="C:plasma membrane"/>
    <property type="evidence" value="ECO:0007669"/>
    <property type="project" value="UniProtKB-SubCell"/>
</dbReference>
<dbReference type="GO" id="GO:0050660">
    <property type="term" value="F:flavin adenine dinucleotide binding"/>
    <property type="evidence" value="ECO:0007669"/>
    <property type="project" value="InterPro"/>
</dbReference>
<dbReference type="CDD" id="cd04590">
    <property type="entry name" value="CBS_pair_CorC_HlyC_assoc"/>
    <property type="match status" value="1"/>
</dbReference>
<dbReference type="FunFam" id="3.30.465.10:FF:000020">
    <property type="entry name" value="HlyC/CorC family transporter"/>
    <property type="match status" value="1"/>
</dbReference>
<dbReference type="FunFam" id="3.10.580.10:FF:000002">
    <property type="entry name" value="Magnesium/cobalt efflux protein CorC"/>
    <property type="match status" value="1"/>
</dbReference>
<dbReference type="Gene3D" id="3.30.465.10">
    <property type="match status" value="1"/>
</dbReference>
<dbReference type="Gene3D" id="3.10.580.10">
    <property type="entry name" value="CBS-domain"/>
    <property type="match status" value="1"/>
</dbReference>
<dbReference type="InterPro" id="IPR000644">
    <property type="entry name" value="CBS_dom"/>
</dbReference>
<dbReference type="InterPro" id="IPR046342">
    <property type="entry name" value="CBS_dom_sf"/>
</dbReference>
<dbReference type="InterPro" id="IPR002550">
    <property type="entry name" value="CNNM"/>
</dbReference>
<dbReference type="InterPro" id="IPR036318">
    <property type="entry name" value="FAD-bd_PCMH-like_sf"/>
</dbReference>
<dbReference type="InterPro" id="IPR016169">
    <property type="entry name" value="FAD-bd_PCMH_sub2"/>
</dbReference>
<dbReference type="InterPro" id="IPR044751">
    <property type="entry name" value="Ion_transp-like_CBS"/>
</dbReference>
<dbReference type="InterPro" id="IPR005170">
    <property type="entry name" value="Transptr-assoc_dom"/>
</dbReference>
<dbReference type="PANTHER" id="PTHR22777">
    <property type="entry name" value="HEMOLYSIN-RELATED"/>
    <property type="match status" value="1"/>
</dbReference>
<dbReference type="PANTHER" id="PTHR22777:SF32">
    <property type="entry name" value="UPF0053 INNER MEMBRANE PROTEIN YFJD"/>
    <property type="match status" value="1"/>
</dbReference>
<dbReference type="Pfam" id="PF00571">
    <property type="entry name" value="CBS"/>
    <property type="match status" value="2"/>
</dbReference>
<dbReference type="Pfam" id="PF01595">
    <property type="entry name" value="CNNM"/>
    <property type="match status" value="1"/>
</dbReference>
<dbReference type="Pfam" id="PF03471">
    <property type="entry name" value="CorC_HlyC"/>
    <property type="match status" value="1"/>
</dbReference>
<dbReference type="SMART" id="SM00116">
    <property type="entry name" value="CBS"/>
    <property type="match status" value="2"/>
</dbReference>
<dbReference type="SMART" id="SM01091">
    <property type="entry name" value="CorC_HlyC"/>
    <property type="match status" value="1"/>
</dbReference>
<dbReference type="SUPFAM" id="SSF54631">
    <property type="entry name" value="CBS-domain pair"/>
    <property type="match status" value="1"/>
</dbReference>
<dbReference type="SUPFAM" id="SSF56176">
    <property type="entry name" value="FAD-binding/transporter-associated domain-like"/>
    <property type="match status" value="1"/>
</dbReference>
<dbReference type="PROSITE" id="PS51371">
    <property type="entry name" value="CBS"/>
    <property type="match status" value="2"/>
</dbReference>
<dbReference type="PROSITE" id="PS51846">
    <property type="entry name" value="CNNM"/>
    <property type="match status" value="1"/>
</dbReference>